<protein>
    <recommendedName>
        <fullName evidence="1">tRNA N6-adenosine threonylcarbamoyltransferase</fullName>
        <ecNumber evidence="1">2.3.1.234</ecNumber>
    </recommendedName>
    <alternativeName>
        <fullName evidence="1">N6-L-threonylcarbamoyladenine synthase</fullName>
        <shortName evidence="1">t(6)A synthase</shortName>
    </alternativeName>
    <alternativeName>
        <fullName evidence="1">t(6)A37 threonylcarbamoyladenosine biosynthesis protein TsaD</fullName>
    </alternativeName>
    <alternativeName>
        <fullName evidence="1">tRNA threonylcarbamoyladenosine biosynthesis protein TsaD</fullName>
    </alternativeName>
</protein>
<reference key="1">
    <citation type="journal article" date="2008" name="Infect. Immun.">
        <title>Genome of Mycoplasma arthritidis.</title>
        <authorList>
            <person name="Dybvig K."/>
            <person name="Zuhua C."/>
            <person name="Lao P."/>
            <person name="Jordan D.S."/>
            <person name="French C.T."/>
            <person name="Tu A.H."/>
            <person name="Loraine A.E."/>
        </authorList>
    </citation>
    <scope>NUCLEOTIDE SEQUENCE [LARGE SCALE GENOMIC DNA]</scope>
    <source>
        <strain>158L3-1</strain>
    </source>
</reference>
<accession>B3PND6</accession>
<comment type="function">
    <text evidence="1">Required for the formation of a threonylcarbamoyl group on adenosine at position 37 (t(6)A37) in tRNAs that read codons beginning with adenine. Is involved in the transfer of the threonylcarbamoyl moiety of threonylcarbamoyl-AMP (TC-AMP) to the N6 group of A37, together with TsaE and TsaB. TsaD likely plays a direct catalytic role in this reaction.</text>
</comment>
<comment type="catalytic activity">
    <reaction evidence="1">
        <text>L-threonylcarbamoyladenylate + adenosine(37) in tRNA = N(6)-L-threonylcarbamoyladenosine(37) in tRNA + AMP + H(+)</text>
        <dbReference type="Rhea" id="RHEA:37059"/>
        <dbReference type="Rhea" id="RHEA-COMP:10162"/>
        <dbReference type="Rhea" id="RHEA-COMP:10163"/>
        <dbReference type="ChEBI" id="CHEBI:15378"/>
        <dbReference type="ChEBI" id="CHEBI:73682"/>
        <dbReference type="ChEBI" id="CHEBI:74411"/>
        <dbReference type="ChEBI" id="CHEBI:74418"/>
        <dbReference type="ChEBI" id="CHEBI:456215"/>
        <dbReference type="EC" id="2.3.1.234"/>
    </reaction>
</comment>
<comment type="cofactor">
    <cofactor evidence="1">
        <name>Fe(2+)</name>
        <dbReference type="ChEBI" id="CHEBI:29033"/>
    </cofactor>
    <text evidence="1">Binds 1 Fe(2+) ion per subunit.</text>
</comment>
<comment type="subcellular location">
    <subcellularLocation>
        <location evidence="1">Cytoplasm</location>
    </subcellularLocation>
</comment>
<comment type="similarity">
    <text evidence="1">Belongs to the KAE1 / TsaD family.</text>
</comment>
<organism>
    <name type="scientific">Metamycoplasma arthritidis (strain 158L3-1)</name>
    <name type="common">Mycoplasma arthritidis</name>
    <dbReference type="NCBI Taxonomy" id="243272"/>
    <lineage>
        <taxon>Bacteria</taxon>
        <taxon>Bacillati</taxon>
        <taxon>Mycoplasmatota</taxon>
        <taxon>Mycoplasmoidales</taxon>
        <taxon>Metamycoplasmataceae</taxon>
        <taxon>Metamycoplasma</taxon>
    </lineage>
</organism>
<proteinExistence type="inferred from homology"/>
<name>TSAD_META1</name>
<feature type="chain" id="PRO_1000145997" description="tRNA N6-adenosine threonylcarbamoyltransferase">
    <location>
        <begin position="1"/>
        <end position="311"/>
    </location>
</feature>
<feature type="binding site" evidence="1">
    <location>
        <position position="108"/>
    </location>
    <ligand>
        <name>Fe cation</name>
        <dbReference type="ChEBI" id="CHEBI:24875"/>
    </ligand>
</feature>
<feature type="binding site" evidence="1">
    <location>
        <position position="112"/>
    </location>
    <ligand>
        <name>Fe cation</name>
        <dbReference type="ChEBI" id="CHEBI:24875"/>
    </ligand>
</feature>
<feature type="binding site" evidence="1">
    <location>
        <begin position="130"/>
        <end position="134"/>
    </location>
    <ligand>
        <name>substrate</name>
    </ligand>
</feature>
<feature type="binding site" evidence="1">
    <location>
        <position position="163"/>
    </location>
    <ligand>
        <name>substrate</name>
    </ligand>
</feature>
<feature type="binding site" evidence="1">
    <location>
        <position position="176"/>
    </location>
    <ligand>
        <name>substrate</name>
    </ligand>
</feature>
<feature type="binding site" evidence="1">
    <location>
        <position position="180"/>
    </location>
    <ligand>
        <name>substrate</name>
    </ligand>
</feature>
<feature type="binding site" evidence="1">
    <location>
        <position position="270"/>
    </location>
    <ligand>
        <name>substrate</name>
    </ligand>
</feature>
<feature type="binding site" evidence="1">
    <location>
        <position position="294"/>
    </location>
    <ligand>
        <name>Fe cation</name>
        <dbReference type="ChEBI" id="CHEBI:24875"/>
    </ligand>
</feature>
<dbReference type="EC" id="2.3.1.234" evidence="1"/>
<dbReference type="EMBL" id="CP001047">
    <property type="protein sequence ID" value="ACF07538.1"/>
    <property type="molecule type" value="Genomic_DNA"/>
</dbReference>
<dbReference type="RefSeq" id="WP_012498495.1">
    <property type="nucleotide sequence ID" value="NC_011025.1"/>
</dbReference>
<dbReference type="SMR" id="B3PND6"/>
<dbReference type="STRING" id="243272.MARTH_orf804"/>
<dbReference type="KEGG" id="mat:MARTH_orf804"/>
<dbReference type="eggNOG" id="COG0533">
    <property type="taxonomic scope" value="Bacteria"/>
</dbReference>
<dbReference type="HOGENOM" id="CLU_023208_0_1_14"/>
<dbReference type="Proteomes" id="UP000008812">
    <property type="component" value="Chromosome"/>
</dbReference>
<dbReference type="GO" id="GO:0005737">
    <property type="term" value="C:cytoplasm"/>
    <property type="evidence" value="ECO:0007669"/>
    <property type="project" value="UniProtKB-SubCell"/>
</dbReference>
<dbReference type="GO" id="GO:0005506">
    <property type="term" value="F:iron ion binding"/>
    <property type="evidence" value="ECO:0007669"/>
    <property type="project" value="UniProtKB-UniRule"/>
</dbReference>
<dbReference type="GO" id="GO:0061711">
    <property type="term" value="F:N(6)-L-threonylcarbamoyladenine synthase activity"/>
    <property type="evidence" value="ECO:0007669"/>
    <property type="project" value="UniProtKB-EC"/>
</dbReference>
<dbReference type="GO" id="GO:0002949">
    <property type="term" value="P:tRNA threonylcarbamoyladenosine modification"/>
    <property type="evidence" value="ECO:0007669"/>
    <property type="project" value="UniProtKB-UniRule"/>
</dbReference>
<dbReference type="Gene3D" id="3.30.420.40">
    <property type="match status" value="2"/>
</dbReference>
<dbReference type="HAMAP" id="MF_01445">
    <property type="entry name" value="TsaD"/>
    <property type="match status" value="1"/>
</dbReference>
<dbReference type="InterPro" id="IPR043129">
    <property type="entry name" value="ATPase_NBD"/>
</dbReference>
<dbReference type="InterPro" id="IPR000905">
    <property type="entry name" value="Gcp-like_dom"/>
</dbReference>
<dbReference type="InterPro" id="IPR017861">
    <property type="entry name" value="KAE1/TsaD"/>
</dbReference>
<dbReference type="InterPro" id="IPR022450">
    <property type="entry name" value="TsaD"/>
</dbReference>
<dbReference type="NCBIfam" id="TIGR00329">
    <property type="entry name" value="gcp_kae1"/>
    <property type="match status" value="1"/>
</dbReference>
<dbReference type="NCBIfam" id="TIGR03723">
    <property type="entry name" value="T6A_TsaD_YgjD"/>
    <property type="match status" value="1"/>
</dbReference>
<dbReference type="PANTHER" id="PTHR11735">
    <property type="entry name" value="TRNA N6-ADENOSINE THREONYLCARBAMOYLTRANSFERASE"/>
    <property type="match status" value="1"/>
</dbReference>
<dbReference type="PANTHER" id="PTHR11735:SF6">
    <property type="entry name" value="TRNA N6-ADENOSINE THREONYLCARBAMOYLTRANSFERASE, MITOCHONDRIAL"/>
    <property type="match status" value="1"/>
</dbReference>
<dbReference type="Pfam" id="PF00814">
    <property type="entry name" value="TsaD"/>
    <property type="match status" value="1"/>
</dbReference>
<dbReference type="PRINTS" id="PR00789">
    <property type="entry name" value="OSIALOPTASE"/>
</dbReference>
<dbReference type="SUPFAM" id="SSF53067">
    <property type="entry name" value="Actin-like ATPase domain"/>
    <property type="match status" value="1"/>
</dbReference>
<sequence>MIIFAIESSHDDTSFALLDDNKPIWMKTITQTEIHKQYGGTVPEIASRLHVKNIGILIEDIKSQININKIDLIAYTKEPGLVGSLHVGYVVAQSLALILNKKIVGLNHLEGHFYSAFIGKEVIYPALGLLVSGGHSQLVLYNSKDDFKIIGQTQDDAVGEVYDKVARKLNLGFPGGPLIDQIWKNNHKLYTAHLTIPKTEGFFDFSFSGIKTNVINLINNCASRNEQINVNQIATEFQNTIVEYLKEHMETAIKKFSPKCIVLAGGVSANFAIREMFYSLHKNVFLPDLEYTTDNAMMIARLAYEKFRYNN</sequence>
<gene>
    <name evidence="1" type="primary">tsaD</name>
    <name type="synonym">gcp</name>
    <name type="ordered locus">MARTH_orf804</name>
</gene>
<keyword id="KW-0012">Acyltransferase</keyword>
<keyword id="KW-0963">Cytoplasm</keyword>
<keyword id="KW-0408">Iron</keyword>
<keyword id="KW-0479">Metal-binding</keyword>
<keyword id="KW-1185">Reference proteome</keyword>
<keyword id="KW-0808">Transferase</keyword>
<keyword id="KW-0819">tRNA processing</keyword>
<evidence type="ECO:0000255" key="1">
    <source>
        <dbReference type="HAMAP-Rule" id="MF_01445"/>
    </source>
</evidence>